<evidence type="ECO:0000250" key="1"/>
<evidence type="ECO:0000250" key="2">
    <source>
        <dbReference type="UniProtKB" id="P84077"/>
    </source>
</evidence>
<evidence type="ECO:0000255" key="3"/>
<evidence type="ECO:0000305" key="4"/>
<proteinExistence type="evidence at protein level"/>
<organism>
    <name type="scientific">Dictyostelium discoideum</name>
    <name type="common">Social amoeba</name>
    <dbReference type="NCBI Taxonomy" id="44689"/>
    <lineage>
        <taxon>Eukaryota</taxon>
        <taxon>Amoebozoa</taxon>
        <taxon>Evosea</taxon>
        <taxon>Eumycetozoa</taxon>
        <taxon>Dictyostelia</taxon>
        <taxon>Dictyosteliales</taxon>
        <taxon>Dictyosteliaceae</taxon>
        <taxon>Dictyostelium</taxon>
    </lineage>
</organism>
<reference key="1">
    <citation type="submission" date="1997-06" db="EMBL/GenBank/DDBJ databases">
        <authorList>
            <person name="Jones D."/>
            <person name="Morgan C."/>
            <person name="Insall R."/>
            <person name="Cockcroft S."/>
        </authorList>
    </citation>
    <scope>NUCLEOTIDE SEQUENCE [MRNA]</scope>
</reference>
<reference key="2">
    <citation type="journal article" date="2005" name="Nature">
        <title>The genome of the social amoeba Dictyostelium discoideum.</title>
        <authorList>
            <person name="Eichinger L."/>
            <person name="Pachebat J.A."/>
            <person name="Gloeckner G."/>
            <person name="Rajandream M.A."/>
            <person name="Sucgang R."/>
            <person name="Berriman M."/>
            <person name="Song J."/>
            <person name="Olsen R."/>
            <person name="Szafranski K."/>
            <person name="Xu Q."/>
            <person name="Tunggal B."/>
            <person name="Kummerfeld S."/>
            <person name="Madera M."/>
            <person name="Konfortov B.A."/>
            <person name="Rivero F."/>
            <person name="Bankier A.T."/>
            <person name="Lehmann R."/>
            <person name="Hamlin N."/>
            <person name="Davies R."/>
            <person name="Gaudet P."/>
            <person name="Fey P."/>
            <person name="Pilcher K."/>
            <person name="Chen G."/>
            <person name="Saunders D."/>
            <person name="Sodergren E.J."/>
            <person name="Davis P."/>
            <person name="Kerhornou A."/>
            <person name="Nie X."/>
            <person name="Hall N."/>
            <person name="Anjard C."/>
            <person name="Hemphill L."/>
            <person name="Bason N."/>
            <person name="Farbrother P."/>
            <person name="Desany B."/>
            <person name="Just E."/>
            <person name="Morio T."/>
            <person name="Rost R."/>
            <person name="Churcher C.M."/>
            <person name="Cooper J."/>
            <person name="Haydock S."/>
            <person name="van Driessche N."/>
            <person name="Cronin A."/>
            <person name="Goodhead I."/>
            <person name="Muzny D.M."/>
            <person name="Mourier T."/>
            <person name="Pain A."/>
            <person name="Lu M."/>
            <person name="Harper D."/>
            <person name="Lindsay R."/>
            <person name="Hauser H."/>
            <person name="James K.D."/>
            <person name="Quiles M."/>
            <person name="Madan Babu M."/>
            <person name="Saito T."/>
            <person name="Buchrieser C."/>
            <person name="Wardroper A."/>
            <person name="Felder M."/>
            <person name="Thangavelu M."/>
            <person name="Johnson D."/>
            <person name="Knights A."/>
            <person name="Loulseged H."/>
            <person name="Mungall K.L."/>
            <person name="Oliver K."/>
            <person name="Price C."/>
            <person name="Quail M.A."/>
            <person name="Urushihara H."/>
            <person name="Hernandez J."/>
            <person name="Rabbinowitsch E."/>
            <person name="Steffen D."/>
            <person name="Sanders M."/>
            <person name="Ma J."/>
            <person name="Kohara Y."/>
            <person name="Sharp S."/>
            <person name="Simmonds M.N."/>
            <person name="Spiegler S."/>
            <person name="Tivey A."/>
            <person name="Sugano S."/>
            <person name="White B."/>
            <person name="Walker D."/>
            <person name="Woodward J.R."/>
            <person name="Winckler T."/>
            <person name="Tanaka Y."/>
            <person name="Shaulsky G."/>
            <person name="Schleicher M."/>
            <person name="Weinstock G.M."/>
            <person name="Rosenthal A."/>
            <person name="Cox E.C."/>
            <person name="Chisholm R.L."/>
            <person name="Gibbs R.A."/>
            <person name="Loomis W.F."/>
            <person name="Platzer M."/>
            <person name="Kay R.R."/>
            <person name="Williams J.G."/>
            <person name="Dear P.H."/>
            <person name="Noegel A.A."/>
            <person name="Barrell B.G."/>
            <person name="Kuspa A."/>
        </authorList>
    </citation>
    <scope>NUCLEOTIDE SEQUENCE [LARGE SCALE GENOMIC DNA]</scope>
    <source>
        <strain>AX4</strain>
    </source>
</reference>
<reference key="3">
    <citation type="journal article" date="2006" name="Mol. Cell. Proteomics">
        <title>Proteomics fingerprinting of phagosome maturation and evidence for the role of a Galpha during uptake.</title>
        <authorList>
            <person name="Gotthardt D."/>
            <person name="Blancheteau V."/>
            <person name="Bosserhoff A."/>
            <person name="Ruppert T."/>
            <person name="Delorenzi M."/>
            <person name="Soldati T."/>
        </authorList>
    </citation>
    <scope>IDENTIFICATION BY MASS SPECTROMETRY [LARGE SCALE ANALYSIS]</scope>
    <source>
        <strain>AX2</strain>
    </source>
</reference>
<dbReference type="EC" id="3.6.5.2" evidence="2"/>
<dbReference type="EMBL" id="AJ000063">
    <property type="protein sequence ID" value="CAA03896.1"/>
    <property type="molecule type" value="mRNA"/>
</dbReference>
<dbReference type="EMBL" id="AAFI02000131">
    <property type="protein sequence ID" value="EAL62820.1"/>
    <property type="molecule type" value="Genomic_DNA"/>
</dbReference>
<dbReference type="RefSeq" id="XP_636353.1">
    <property type="nucleotide sequence ID" value="XM_631261.1"/>
</dbReference>
<dbReference type="SMR" id="O00909"/>
<dbReference type="FunCoup" id="O00909">
    <property type="interactions" value="932"/>
</dbReference>
<dbReference type="STRING" id="44689.O00909"/>
<dbReference type="PaxDb" id="44689-DDB0191101"/>
<dbReference type="EnsemblProtists" id="EAL62820">
    <property type="protein sequence ID" value="EAL62820"/>
    <property type="gene ID" value="DDB_G0289173"/>
</dbReference>
<dbReference type="GeneID" id="8627026"/>
<dbReference type="KEGG" id="ddi:DDB_G0289173"/>
<dbReference type="dictyBase" id="DDB_G0289173">
    <property type="gene designation" value="arfA"/>
</dbReference>
<dbReference type="VEuPathDB" id="AmoebaDB:DDB_G0289173"/>
<dbReference type="eggNOG" id="KOG0070">
    <property type="taxonomic scope" value="Eukaryota"/>
</dbReference>
<dbReference type="HOGENOM" id="CLU_040729_9_3_1"/>
<dbReference type="InParanoid" id="O00909"/>
<dbReference type="OMA" id="HYYANTN"/>
<dbReference type="PhylomeDB" id="O00909"/>
<dbReference type="Reactome" id="R-DDI-1660514">
    <property type="pathway name" value="Synthesis of PIPs at the Golgi membrane"/>
</dbReference>
<dbReference type="Reactome" id="R-DDI-199992">
    <property type="pathway name" value="trans-Golgi Network Vesicle Budding"/>
</dbReference>
<dbReference type="Reactome" id="R-DDI-5620916">
    <property type="pathway name" value="VxPx cargo-targeting to cilium"/>
</dbReference>
<dbReference type="Reactome" id="R-DDI-6807878">
    <property type="pathway name" value="COPI-mediated anterograde transport"/>
</dbReference>
<dbReference type="Reactome" id="R-DDI-6811434">
    <property type="pathway name" value="COPI-dependent Golgi-to-ER retrograde traffic"/>
</dbReference>
<dbReference type="Reactome" id="R-DDI-6811438">
    <property type="pathway name" value="Intra-Golgi traffic"/>
</dbReference>
<dbReference type="PRO" id="PR:O00909"/>
<dbReference type="Proteomes" id="UP000002195">
    <property type="component" value="Chromosome 5"/>
</dbReference>
<dbReference type="GO" id="GO:0005737">
    <property type="term" value="C:cytoplasm"/>
    <property type="evidence" value="ECO:0000318"/>
    <property type="project" value="GO_Central"/>
</dbReference>
<dbReference type="GO" id="GO:0005829">
    <property type="term" value="C:cytosol"/>
    <property type="evidence" value="ECO:0000314"/>
    <property type="project" value="dictyBase"/>
</dbReference>
<dbReference type="GO" id="GO:0005794">
    <property type="term" value="C:Golgi apparatus"/>
    <property type="evidence" value="ECO:0000314"/>
    <property type="project" value="dictyBase"/>
</dbReference>
<dbReference type="GO" id="GO:0140220">
    <property type="term" value="C:pathogen-containing vacuole"/>
    <property type="evidence" value="ECO:0000314"/>
    <property type="project" value="dictyBase"/>
</dbReference>
<dbReference type="GO" id="GO:0048471">
    <property type="term" value="C:perinuclear region of cytoplasm"/>
    <property type="evidence" value="ECO:0000314"/>
    <property type="project" value="dictyBase"/>
</dbReference>
<dbReference type="GO" id="GO:0045335">
    <property type="term" value="C:phagocytic vesicle"/>
    <property type="evidence" value="ECO:0007005"/>
    <property type="project" value="dictyBase"/>
</dbReference>
<dbReference type="GO" id="GO:0005886">
    <property type="term" value="C:plasma membrane"/>
    <property type="evidence" value="ECO:0000314"/>
    <property type="project" value="dictyBase"/>
</dbReference>
<dbReference type="GO" id="GO:0005525">
    <property type="term" value="F:GTP binding"/>
    <property type="evidence" value="ECO:0000314"/>
    <property type="project" value="dictyBase"/>
</dbReference>
<dbReference type="GO" id="GO:0003924">
    <property type="term" value="F:GTPase activity"/>
    <property type="evidence" value="ECO:0007669"/>
    <property type="project" value="InterPro"/>
</dbReference>
<dbReference type="GO" id="GO:0006886">
    <property type="term" value="P:intracellular protein transport"/>
    <property type="evidence" value="ECO:0000318"/>
    <property type="project" value="GO_Central"/>
</dbReference>
<dbReference type="GO" id="GO:0000281">
    <property type="term" value="P:mitotic cytokinesis"/>
    <property type="evidence" value="ECO:0000315"/>
    <property type="project" value="dictyBase"/>
</dbReference>
<dbReference type="GO" id="GO:0051489">
    <property type="term" value="P:regulation of filopodium assembly"/>
    <property type="evidence" value="ECO:0000315"/>
    <property type="project" value="dictyBase"/>
</dbReference>
<dbReference type="GO" id="GO:0016192">
    <property type="term" value="P:vesicle-mediated transport"/>
    <property type="evidence" value="ECO:0000318"/>
    <property type="project" value="GO_Central"/>
</dbReference>
<dbReference type="CDD" id="cd04150">
    <property type="entry name" value="Arf1_5_like"/>
    <property type="match status" value="1"/>
</dbReference>
<dbReference type="FunFam" id="3.40.50.300:FF:003500">
    <property type="entry name" value="ADP-ribosylation factor 1"/>
    <property type="match status" value="1"/>
</dbReference>
<dbReference type="Gene3D" id="3.40.50.300">
    <property type="entry name" value="P-loop containing nucleotide triphosphate hydrolases"/>
    <property type="match status" value="1"/>
</dbReference>
<dbReference type="InterPro" id="IPR045872">
    <property type="entry name" value="Arf1-5-like"/>
</dbReference>
<dbReference type="InterPro" id="IPR027417">
    <property type="entry name" value="P-loop_NTPase"/>
</dbReference>
<dbReference type="InterPro" id="IPR005225">
    <property type="entry name" value="Small_GTP-bd"/>
</dbReference>
<dbReference type="InterPro" id="IPR024156">
    <property type="entry name" value="Small_GTPase_ARF"/>
</dbReference>
<dbReference type="InterPro" id="IPR006689">
    <property type="entry name" value="Small_GTPase_ARF/SAR"/>
</dbReference>
<dbReference type="NCBIfam" id="TIGR00231">
    <property type="entry name" value="small_GTP"/>
    <property type="match status" value="1"/>
</dbReference>
<dbReference type="PANTHER" id="PTHR11711">
    <property type="entry name" value="ADP RIBOSYLATION FACTOR-RELATED"/>
    <property type="match status" value="1"/>
</dbReference>
<dbReference type="Pfam" id="PF00025">
    <property type="entry name" value="Arf"/>
    <property type="match status" value="1"/>
</dbReference>
<dbReference type="PRINTS" id="PR00328">
    <property type="entry name" value="SAR1GTPBP"/>
</dbReference>
<dbReference type="SMART" id="SM00177">
    <property type="entry name" value="ARF"/>
    <property type="match status" value="1"/>
</dbReference>
<dbReference type="SMART" id="SM00178">
    <property type="entry name" value="SAR"/>
    <property type="match status" value="1"/>
</dbReference>
<dbReference type="SUPFAM" id="SSF52540">
    <property type="entry name" value="P-loop containing nucleoside triphosphate hydrolases"/>
    <property type="match status" value="1"/>
</dbReference>
<dbReference type="PROSITE" id="PS51417">
    <property type="entry name" value="ARF"/>
    <property type="match status" value="1"/>
</dbReference>
<accession>O00909</accession>
<accession>Q54HT6</accession>
<feature type="initiator methionine" description="Removed" evidence="3">
    <location>
        <position position="1"/>
    </location>
</feature>
<feature type="chain" id="PRO_0000207445" description="ADP-ribosylation factor 1">
    <location>
        <begin position="2"/>
        <end position="182"/>
    </location>
</feature>
<feature type="binding site" evidence="1">
    <location>
        <begin position="24"/>
        <end position="31"/>
    </location>
    <ligand>
        <name>GTP</name>
        <dbReference type="ChEBI" id="CHEBI:37565"/>
    </ligand>
</feature>
<feature type="binding site" evidence="1">
    <location>
        <begin position="67"/>
        <end position="71"/>
    </location>
    <ligand>
        <name>GTP</name>
        <dbReference type="ChEBI" id="CHEBI:37565"/>
    </ligand>
</feature>
<feature type="binding site" evidence="1">
    <location>
        <begin position="126"/>
        <end position="129"/>
    </location>
    <ligand>
        <name>GTP</name>
        <dbReference type="ChEBI" id="CHEBI:37565"/>
    </ligand>
</feature>
<feature type="lipid moiety-binding region" description="N-myristoyl glycine" evidence="3">
    <location>
        <position position="2"/>
    </location>
</feature>
<name>ARF1_DICDI</name>
<comment type="function">
    <text evidence="1">GTP-binding protein involved in protein trafficking; may modulate vesicle budding and uncoating within the Golgi apparatus.</text>
</comment>
<comment type="catalytic activity">
    <reaction evidence="2">
        <text>GTP + H2O = GDP + phosphate + H(+)</text>
        <dbReference type="Rhea" id="RHEA:19669"/>
        <dbReference type="ChEBI" id="CHEBI:15377"/>
        <dbReference type="ChEBI" id="CHEBI:15378"/>
        <dbReference type="ChEBI" id="CHEBI:37565"/>
        <dbReference type="ChEBI" id="CHEBI:43474"/>
        <dbReference type="ChEBI" id="CHEBI:58189"/>
        <dbReference type="EC" id="3.6.5.2"/>
    </reaction>
</comment>
<comment type="subcellular location">
    <subcellularLocation>
        <location evidence="1">Golgi apparatus</location>
    </subcellularLocation>
</comment>
<comment type="similarity">
    <text evidence="4">Belongs to the small GTPase superfamily. Arf family.</text>
</comment>
<sequence>MGLAFGKLFSRFFGKKDMRILMVGLDAAGKTTILYKLKLGEIVTTIPTIGFNVETVEFKNINFTVWDVGGQDKIRPLWRHYFQNTQGLIFVVDSNDRERIQEACDELTKMLNEDELRDAVLLVFCNKQDLPNAMSVAEVTDKLNLHSLRSRKWYIQSTCATSGDGLYEGLDWLSNTLTSSSK</sequence>
<protein>
    <recommendedName>
        <fullName>ADP-ribosylation factor 1</fullName>
        <ecNumber evidence="2">3.6.5.2</ecNumber>
    </recommendedName>
</protein>
<keyword id="KW-0931">ER-Golgi transport</keyword>
<keyword id="KW-0333">Golgi apparatus</keyword>
<keyword id="KW-0342">GTP-binding</keyword>
<keyword id="KW-0378">Hydrolase</keyword>
<keyword id="KW-0449">Lipoprotein</keyword>
<keyword id="KW-0519">Myristate</keyword>
<keyword id="KW-0547">Nucleotide-binding</keyword>
<keyword id="KW-0653">Protein transport</keyword>
<keyword id="KW-1185">Reference proteome</keyword>
<keyword id="KW-0813">Transport</keyword>
<gene>
    <name type="primary">arfA</name>
    <name type="synonym">arf1</name>
    <name type="ORF">DDB_G0289173</name>
</gene>